<reference key="1">
    <citation type="journal article" date="1999" name="Nature">
        <title>Evidence for lateral gene transfer between Archaea and Bacteria from genome sequence of Thermotoga maritima.</title>
        <authorList>
            <person name="Nelson K.E."/>
            <person name="Clayton R.A."/>
            <person name="Gill S.R."/>
            <person name="Gwinn M.L."/>
            <person name="Dodson R.J."/>
            <person name="Haft D.H."/>
            <person name="Hickey E.K."/>
            <person name="Peterson J.D."/>
            <person name="Nelson W.C."/>
            <person name="Ketchum K.A."/>
            <person name="McDonald L.A."/>
            <person name="Utterback T.R."/>
            <person name="Malek J.A."/>
            <person name="Linher K.D."/>
            <person name="Garrett M.M."/>
            <person name="Stewart A.M."/>
            <person name="Cotton M.D."/>
            <person name="Pratt M.S."/>
            <person name="Phillips C.A."/>
            <person name="Richardson D.L."/>
            <person name="Heidelberg J.F."/>
            <person name="Sutton G.G."/>
            <person name="Fleischmann R.D."/>
            <person name="Eisen J.A."/>
            <person name="White O."/>
            <person name="Salzberg S.L."/>
            <person name="Smith H.O."/>
            <person name="Venter J.C."/>
            <person name="Fraser C.M."/>
        </authorList>
    </citation>
    <scope>NUCLEOTIDE SEQUENCE [LARGE SCALE GENOMIC DNA]</scope>
    <source>
        <strain>ATCC 43589 / DSM 3109 / JCM 10099 / NBRC 100826 / MSB8</strain>
    </source>
</reference>
<reference evidence="2" key="2">
    <citation type="submission" date="2010-05" db="PDB data bank">
        <title>Crystal structure of Tm1821, the 8-oxoguanine DNA glycosylase of Thermotoga maritima.</title>
        <authorList>
            <person name="Cooper D.R."/>
            <person name="Roy A."/>
            <person name="Derewenda Z.S."/>
        </authorList>
    </citation>
    <scope>X-RAY CRYSTALLOGRAPHY (1.50 ANGSTROMS)</scope>
</reference>
<dbReference type="EC" id="3.2.2.-" evidence="1"/>
<dbReference type="EC" id="4.2.99.18" evidence="1"/>
<dbReference type="EMBL" id="AE000512">
    <property type="protein sequence ID" value="AAD36884.1"/>
    <property type="molecule type" value="Genomic_DNA"/>
</dbReference>
<dbReference type="PIR" id="H72206">
    <property type="entry name" value="H72206"/>
</dbReference>
<dbReference type="RefSeq" id="NP_229618.1">
    <property type="nucleotide sequence ID" value="NC_000853.1"/>
</dbReference>
<dbReference type="RefSeq" id="WP_004082367.1">
    <property type="nucleotide sequence ID" value="NZ_CP011107.1"/>
</dbReference>
<dbReference type="PDB" id="3N0U">
    <property type="method" value="X-ray"/>
    <property type="resolution" value="1.50 A"/>
    <property type="chains" value="A/B/C=1-207"/>
</dbReference>
<dbReference type="PDBsum" id="3N0U"/>
<dbReference type="SMR" id="Q9X2E1"/>
<dbReference type="STRING" id="243274.TM_1821"/>
<dbReference type="PaxDb" id="243274-THEMA_05090"/>
<dbReference type="EnsemblBacteria" id="AAD36884">
    <property type="protein sequence ID" value="AAD36884"/>
    <property type="gene ID" value="TM_1821"/>
</dbReference>
<dbReference type="KEGG" id="tma:TM1821"/>
<dbReference type="KEGG" id="tmi:THEMA_05090"/>
<dbReference type="KEGG" id="tmm:Tmari_1831"/>
<dbReference type="KEGG" id="tmw:THMA_1866"/>
<dbReference type="eggNOG" id="COG1059">
    <property type="taxonomic scope" value="Bacteria"/>
</dbReference>
<dbReference type="InParanoid" id="Q9X2E1"/>
<dbReference type="OrthoDB" id="12078at2"/>
<dbReference type="EvolutionaryTrace" id="Q9X2E1"/>
<dbReference type="Proteomes" id="UP000008183">
    <property type="component" value="Chromosome"/>
</dbReference>
<dbReference type="GO" id="GO:0140078">
    <property type="term" value="F:class I DNA-(apurinic or apyrimidinic site) endonuclease activity"/>
    <property type="evidence" value="ECO:0007669"/>
    <property type="project" value="UniProtKB-EC"/>
</dbReference>
<dbReference type="GO" id="GO:0016799">
    <property type="term" value="F:hydrolase activity, hydrolyzing N-glycosyl compounds"/>
    <property type="evidence" value="ECO:0007669"/>
    <property type="project" value="UniProtKB-UniRule"/>
</dbReference>
<dbReference type="GO" id="GO:0006284">
    <property type="term" value="P:base-excision repair"/>
    <property type="evidence" value="ECO:0007669"/>
    <property type="project" value="UniProtKB-UniRule"/>
</dbReference>
<dbReference type="CDD" id="cd00056">
    <property type="entry name" value="ENDO3c"/>
    <property type="match status" value="1"/>
</dbReference>
<dbReference type="Gene3D" id="1.10.1670.10">
    <property type="entry name" value="Helix-hairpin-Helix base-excision DNA repair enzymes (C-terminal)"/>
    <property type="match status" value="1"/>
</dbReference>
<dbReference type="Gene3D" id="1.10.340.30">
    <property type="entry name" value="Hypothetical protein, domain 2"/>
    <property type="match status" value="1"/>
</dbReference>
<dbReference type="HAMAP" id="MF_00241">
    <property type="entry name" value="Ogg"/>
    <property type="match status" value="1"/>
</dbReference>
<dbReference type="InterPro" id="IPR012092">
    <property type="entry name" value="DNA_glyclase/AP_lyase_Ogg"/>
</dbReference>
<dbReference type="InterPro" id="IPR011257">
    <property type="entry name" value="DNA_glycosylase"/>
</dbReference>
<dbReference type="InterPro" id="IPR003265">
    <property type="entry name" value="HhH-GPD_domain"/>
</dbReference>
<dbReference type="InterPro" id="IPR023170">
    <property type="entry name" value="HhH_base_excis_C"/>
</dbReference>
<dbReference type="NCBIfam" id="NF002305">
    <property type="entry name" value="PRK01229.1"/>
    <property type="match status" value="1"/>
</dbReference>
<dbReference type="Pfam" id="PF22175">
    <property type="entry name" value="Ogg-HhH"/>
    <property type="match status" value="1"/>
</dbReference>
<dbReference type="PIRSF" id="PIRSF005954">
    <property type="entry name" value="Thrmst_ogg"/>
    <property type="match status" value="1"/>
</dbReference>
<dbReference type="SMART" id="SM00478">
    <property type="entry name" value="ENDO3c"/>
    <property type="match status" value="1"/>
</dbReference>
<dbReference type="SUPFAM" id="SSF48150">
    <property type="entry name" value="DNA-glycosylase"/>
    <property type="match status" value="1"/>
</dbReference>
<organism>
    <name type="scientific">Thermotoga maritima (strain ATCC 43589 / DSM 3109 / JCM 10099 / NBRC 100826 / MSB8)</name>
    <dbReference type="NCBI Taxonomy" id="243274"/>
    <lineage>
        <taxon>Bacteria</taxon>
        <taxon>Thermotogati</taxon>
        <taxon>Thermotogota</taxon>
        <taxon>Thermotogae</taxon>
        <taxon>Thermotogales</taxon>
        <taxon>Thermotogaceae</taxon>
        <taxon>Thermotoga</taxon>
    </lineage>
</organism>
<comment type="function">
    <text evidence="1">Catalyzes the excision of an oxidatively damaged form of guanine (7,8-dihydro-8-oxoguanine = 8-oxoG) from DNA. Also cleaves the DNA backbone at apurinic/apyrimidinic sites (AP sites).</text>
</comment>
<comment type="catalytic activity">
    <reaction evidence="1">
        <text>2'-deoxyribonucleotide-(2'-deoxyribose 5'-phosphate)-2'-deoxyribonucleotide-DNA = a 3'-end 2'-deoxyribonucleotide-(2,3-dehydro-2,3-deoxyribose 5'-phosphate)-DNA + a 5'-end 5'-phospho-2'-deoxyribonucleoside-DNA + H(+)</text>
        <dbReference type="Rhea" id="RHEA:66592"/>
        <dbReference type="Rhea" id="RHEA-COMP:13180"/>
        <dbReference type="Rhea" id="RHEA-COMP:16897"/>
        <dbReference type="Rhea" id="RHEA-COMP:17067"/>
        <dbReference type="ChEBI" id="CHEBI:15378"/>
        <dbReference type="ChEBI" id="CHEBI:136412"/>
        <dbReference type="ChEBI" id="CHEBI:157695"/>
        <dbReference type="ChEBI" id="CHEBI:167181"/>
        <dbReference type="EC" id="4.2.99.18"/>
    </reaction>
</comment>
<comment type="similarity">
    <text evidence="1">Belongs to the type-2 OGG1 family.</text>
</comment>
<feature type="chain" id="PRO_0000159572" description="8-oxoguanine DNA glycosylase/AP lyase">
    <location>
        <begin position="1"/>
        <end position="207"/>
    </location>
</feature>
<feature type="active site" evidence="1">
    <location>
        <position position="129"/>
    </location>
</feature>
<feature type="active site" evidence="1">
    <location>
        <position position="147"/>
    </location>
</feature>
<feature type="site" description="Important for guanine/8-oxoguanine distinction" evidence="1">
    <location>
        <position position="207"/>
    </location>
</feature>
<feature type="helix" evidence="3">
    <location>
        <begin position="1"/>
        <end position="32"/>
    </location>
</feature>
<feature type="helix" evidence="3">
    <location>
        <begin position="35"/>
        <end position="47"/>
    </location>
</feature>
<feature type="turn" evidence="3">
    <location>
        <begin position="48"/>
        <end position="50"/>
    </location>
</feature>
<feature type="helix" evidence="3">
    <location>
        <begin position="53"/>
        <end position="63"/>
    </location>
</feature>
<feature type="helix" evidence="3">
    <location>
        <begin position="66"/>
        <end position="69"/>
    </location>
</feature>
<feature type="helix" evidence="3">
    <location>
        <begin position="72"/>
        <end position="81"/>
    </location>
</feature>
<feature type="helix" evidence="3">
    <location>
        <begin position="87"/>
        <end position="97"/>
    </location>
</feature>
<feature type="helix" evidence="3">
    <location>
        <begin position="98"/>
        <end position="100"/>
    </location>
</feature>
<feature type="turn" evidence="3">
    <location>
        <begin position="101"/>
        <end position="103"/>
    </location>
</feature>
<feature type="helix" evidence="3">
    <location>
        <begin position="104"/>
        <end position="109"/>
    </location>
</feature>
<feature type="helix" evidence="3">
    <location>
        <begin position="112"/>
        <end position="122"/>
    </location>
</feature>
<feature type="helix" evidence="3">
    <location>
        <begin position="128"/>
        <end position="136"/>
    </location>
</feature>
<feature type="turn" evidence="3">
    <location>
        <begin position="137"/>
        <end position="139"/>
    </location>
</feature>
<feature type="helix" evidence="3">
    <location>
        <begin position="148"/>
        <end position="156"/>
    </location>
</feature>
<feature type="helix" evidence="3">
    <location>
        <begin position="169"/>
        <end position="186"/>
    </location>
</feature>
<feature type="helix" evidence="3">
    <location>
        <begin position="190"/>
        <end position="202"/>
    </location>
</feature>
<proteinExistence type="evidence at protein level"/>
<evidence type="ECO:0000255" key="1">
    <source>
        <dbReference type="HAMAP-Rule" id="MF_00241"/>
    </source>
</evidence>
<evidence type="ECO:0007744" key="2">
    <source>
        <dbReference type="PDB" id="3N0U"/>
    </source>
</evidence>
<evidence type="ECO:0007829" key="3">
    <source>
        <dbReference type="PDB" id="3N0U"/>
    </source>
</evidence>
<sequence length="207" mass="24210">MEELLKELERIREEAKPLVEQRFEEFKRLGEEGTEEDLFCELSFCVLTANWSAEGGIRAQKEIGKGFVHLPLEELAEKLREVGHRYPQKRAEFIVENRKLLGKLKNLVKGDPFQSREFLVRNAKGIGWKEASHFLRNTGVEDLAILDKHVLRLMKRHGLIQEIPKGWSKKRYLYVEEILRKVAEAFGESPGKFDLYLWYLVKGKVDK</sequence>
<keyword id="KW-0002">3D-structure</keyword>
<keyword id="KW-0227">DNA damage</keyword>
<keyword id="KW-0234">DNA repair</keyword>
<keyword id="KW-0326">Glycosidase</keyword>
<keyword id="KW-0378">Hydrolase</keyword>
<keyword id="KW-0456">Lyase</keyword>
<keyword id="KW-0511">Multifunctional enzyme</keyword>
<keyword id="KW-1185">Reference proteome</keyword>
<name>OGG1_THEMA</name>
<protein>
    <recommendedName>
        <fullName evidence="1">8-oxoguanine DNA glycosylase/AP lyase</fullName>
    </recommendedName>
    <domain>
        <recommendedName>
            <fullName evidence="1">8-oxoguanine DNA glycosylase</fullName>
            <shortName evidence="1">8-oxoG DNA glycosylase</shortName>
            <ecNumber evidence="1">3.2.2.-</ecNumber>
        </recommendedName>
    </domain>
    <domain>
        <recommendedName>
            <fullName evidence="1">DNA-(apurinic or apyrimidinic site) lyase</fullName>
            <shortName evidence="1">AP lyase</shortName>
            <ecNumber evidence="1">4.2.99.18</ecNumber>
        </recommendedName>
    </domain>
</protein>
<gene>
    <name evidence="1" type="primary">ogg</name>
    <name type="ordered locus">TM_1821</name>
</gene>
<accession>Q9X2E1</accession>